<accession>O21517</accession>
<name>NU4LM_OXYRU</name>
<dbReference type="EC" id="7.1.1.2"/>
<dbReference type="EMBL" id="U83805">
    <property type="protein sequence ID" value="AAB87215.1"/>
    <property type="molecule type" value="Genomic_DNA"/>
</dbReference>
<dbReference type="PIR" id="T17083">
    <property type="entry name" value="T17083"/>
</dbReference>
<dbReference type="SMR" id="O21517"/>
<dbReference type="GO" id="GO:0005743">
    <property type="term" value="C:mitochondrial inner membrane"/>
    <property type="evidence" value="ECO:0000250"/>
    <property type="project" value="UniProtKB"/>
</dbReference>
<dbReference type="GO" id="GO:0045271">
    <property type="term" value="C:respiratory chain complex I"/>
    <property type="evidence" value="ECO:0000250"/>
    <property type="project" value="UniProtKB"/>
</dbReference>
<dbReference type="GO" id="GO:0008137">
    <property type="term" value="F:NADH dehydrogenase (ubiquinone) activity"/>
    <property type="evidence" value="ECO:0000250"/>
    <property type="project" value="UniProtKB"/>
</dbReference>
<dbReference type="GO" id="GO:0042773">
    <property type="term" value="P:ATP synthesis coupled electron transport"/>
    <property type="evidence" value="ECO:0007669"/>
    <property type="project" value="InterPro"/>
</dbReference>
<dbReference type="FunFam" id="1.10.287.3510:FF:000002">
    <property type="entry name" value="NADH-ubiquinone oxidoreductase chain 4L"/>
    <property type="match status" value="1"/>
</dbReference>
<dbReference type="Gene3D" id="1.10.287.3510">
    <property type="match status" value="1"/>
</dbReference>
<dbReference type="InterPro" id="IPR001133">
    <property type="entry name" value="NADH_UbQ_OxRdtase_chain4L/K"/>
</dbReference>
<dbReference type="InterPro" id="IPR039428">
    <property type="entry name" value="NUOK/Mnh_C1-like"/>
</dbReference>
<dbReference type="PANTHER" id="PTHR11434:SF0">
    <property type="entry name" value="NADH-UBIQUINONE OXIDOREDUCTASE CHAIN 4L"/>
    <property type="match status" value="1"/>
</dbReference>
<dbReference type="PANTHER" id="PTHR11434">
    <property type="entry name" value="NADH-UBIQUINONE OXIDOREDUCTASE SUBUNIT ND4L"/>
    <property type="match status" value="1"/>
</dbReference>
<dbReference type="Pfam" id="PF00420">
    <property type="entry name" value="Oxidored_q2"/>
    <property type="match status" value="1"/>
</dbReference>
<evidence type="ECO:0000250" key="1">
    <source>
        <dbReference type="UniProtKB" id="P03901"/>
    </source>
</evidence>
<evidence type="ECO:0000250" key="2">
    <source>
        <dbReference type="UniProtKB" id="P03902"/>
    </source>
</evidence>
<evidence type="ECO:0000255" key="3"/>
<evidence type="ECO:0000305" key="4"/>
<sequence length="98" mass="10777">MTLTTMNILLAFFFSLLGTLIFRSHLMSTLLCLEGMMLSLFIMTTITALDTQSMVMYTIPITTLVFAACEAAVGLALLTMVSNTYGTDHVQNLNLLQC</sequence>
<gene>
    <name type="primary">MT-ND4L</name>
    <name type="synonym">MTND4L</name>
    <name type="synonym">NADH4L</name>
    <name type="synonym">ND4L</name>
</gene>
<keyword id="KW-0249">Electron transport</keyword>
<keyword id="KW-0472">Membrane</keyword>
<keyword id="KW-0496">Mitochondrion</keyword>
<keyword id="KW-0999">Mitochondrion inner membrane</keyword>
<keyword id="KW-0520">NAD</keyword>
<keyword id="KW-0679">Respiratory chain</keyword>
<keyword id="KW-1278">Translocase</keyword>
<keyword id="KW-0812">Transmembrane</keyword>
<keyword id="KW-1133">Transmembrane helix</keyword>
<keyword id="KW-0813">Transport</keyword>
<keyword id="KW-0830">Ubiquinone</keyword>
<reference key="1">
    <citation type="journal article" date="1998" name="Mol. Biol. Evol.">
        <title>Molecular systematics and paleobiogeography of the South American sigmodontine rodents.</title>
        <authorList>
            <person name="Engel S.R."/>
            <person name="Hogan K.M."/>
            <person name="Taylor J.F."/>
            <person name="Davis S.K."/>
        </authorList>
    </citation>
    <scope>NUCLEOTIDE SEQUENCE [GENOMIC DNA]</scope>
</reference>
<feature type="chain" id="PRO_0000254953" description="NADH-ubiquinone oxidoreductase chain 4L">
    <location>
        <begin position="1"/>
        <end position="98"/>
    </location>
</feature>
<feature type="transmembrane region" description="Helical" evidence="3">
    <location>
        <begin position="2"/>
        <end position="22"/>
    </location>
</feature>
<feature type="transmembrane region" description="Helical" evidence="3">
    <location>
        <begin position="29"/>
        <end position="49"/>
    </location>
</feature>
<feature type="transmembrane region" description="Helical" evidence="3">
    <location>
        <begin position="61"/>
        <end position="81"/>
    </location>
</feature>
<comment type="function">
    <text evidence="1">Core subunit of the mitochondrial membrane respiratory chain NADH dehydrogenase (Complex I) which catalyzes electron transfer from NADH through the respiratory chain, using ubiquinone as an electron acceptor. Part of the enzyme membrane arm which is embedded in the lipid bilayer and involved in proton translocation.</text>
</comment>
<comment type="catalytic activity">
    <reaction evidence="1">
        <text>a ubiquinone + NADH + 5 H(+)(in) = a ubiquinol + NAD(+) + 4 H(+)(out)</text>
        <dbReference type="Rhea" id="RHEA:29091"/>
        <dbReference type="Rhea" id="RHEA-COMP:9565"/>
        <dbReference type="Rhea" id="RHEA-COMP:9566"/>
        <dbReference type="ChEBI" id="CHEBI:15378"/>
        <dbReference type="ChEBI" id="CHEBI:16389"/>
        <dbReference type="ChEBI" id="CHEBI:17976"/>
        <dbReference type="ChEBI" id="CHEBI:57540"/>
        <dbReference type="ChEBI" id="CHEBI:57945"/>
        <dbReference type="EC" id="7.1.1.2"/>
    </reaction>
    <physiologicalReaction direction="left-to-right" evidence="1">
        <dbReference type="Rhea" id="RHEA:29092"/>
    </physiologicalReaction>
</comment>
<comment type="subunit">
    <text evidence="2">Core subunit of respiratory chain NADH dehydrogenase (Complex I) which is composed of 45 different subunits.</text>
</comment>
<comment type="subcellular location">
    <subcellularLocation>
        <location evidence="2">Mitochondrion inner membrane</location>
        <topology evidence="3">Multi-pass membrane protein</topology>
    </subcellularLocation>
</comment>
<comment type="similarity">
    <text evidence="4">Belongs to the complex I subunit 4L family.</text>
</comment>
<geneLocation type="mitochondrion"/>
<protein>
    <recommendedName>
        <fullName>NADH-ubiquinone oxidoreductase chain 4L</fullName>
        <ecNumber>7.1.1.2</ecNumber>
    </recommendedName>
    <alternativeName>
        <fullName>NADH dehydrogenase subunit 4L</fullName>
    </alternativeName>
</protein>
<proteinExistence type="inferred from homology"/>
<organism>
    <name type="scientific">Oxymycterus rufus</name>
    <name type="common">Red hocicudo</name>
    <dbReference type="NCBI Taxonomy" id="56230"/>
    <lineage>
        <taxon>Eukaryota</taxon>
        <taxon>Metazoa</taxon>
        <taxon>Chordata</taxon>
        <taxon>Craniata</taxon>
        <taxon>Vertebrata</taxon>
        <taxon>Euteleostomi</taxon>
        <taxon>Mammalia</taxon>
        <taxon>Eutheria</taxon>
        <taxon>Euarchontoglires</taxon>
        <taxon>Glires</taxon>
        <taxon>Rodentia</taxon>
        <taxon>Myomorpha</taxon>
        <taxon>Muroidea</taxon>
        <taxon>Cricetidae</taxon>
        <taxon>Sigmodontinae</taxon>
        <taxon>Oxymycterus</taxon>
    </lineage>
</organism>